<sequence>MAGNTIGQLFRVTTFGESHGLALGCIVDGVPPGIPLTEADLQHDLDRRRPGTSRYTTQRREPDQVKILSGVFEGVTTGTSIGLLIENTDQRSQDYSAIKDVFRPGHADYTYEQKYGLRDYRGGGRSSARETAMRVAAGAIAKKYLAEKFGIEIRGCLTQMGDIPLEIKDWSQVEQNPFFCPDPDKIDALDELMRALKKEGDSIGAKVTVVASGVPAGLGEPVFDRLDADIAHALMSINAVKGVEIGDGFDVVALRGSQNRDEITKDGFQSNHAGGILGGISSGQKIIAHMALKPTSSITVPGRTINRFGEEVEMITKGRHDPCVGIRAVPIAEAMLAIVLMDHLLRQRAQNADVKTDIPRW</sequence>
<protein>
    <recommendedName>
        <fullName evidence="1">Chorismate synthase</fullName>
        <shortName evidence="1">CS</shortName>
        <ecNumber evidence="1">4.2.3.5</ecNumber>
    </recommendedName>
    <alternativeName>
        <fullName evidence="1">5-enolpyruvylshikimate-3-phosphate phospholyase</fullName>
    </alternativeName>
</protein>
<name>AROC_ECOK1</name>
<comment type="function">
    <text evidence="1">Catalyzes the anti-1,4-elimination of the C-3 phosphate and the C-6 proR hydrogen from 5-enolpyruvylshikimate-3-phosphate (EPSP) to yield chorismate, which is the branch point compound that serves as the starting substrate for the three terminal pathways of aromatic amino acid biosynthesis. This reaction introduces a second double bond into the aromatic ring system.</text>
</comment>
<comment type="catalytic activity">
    <reaction evidence="1">
        <text>5-O-(1-carboxyvinyl)-3-phosphoshikimate = chorismate + phosphate</text>
        <dbReference type="Rhea" id="RHEA:21020"/>
        <dbReference type="ChEBI" id="CHEBI:29748"/>
        <dbReference type="ChEBI" id="CHEBI:43474"/>
        <dbReference type="ChEBI" id="CHEBI:57701"/>
        <dbReference type="EC" id="4.2.3.5"/>
    </reaction>
</comment>
<comment type="cofactor">
    <cofactor evidence="1">
        <name>FMNH2</name>
        <dbReference type="ChEBI" id="CHEBI:57618"/>
    </cofactor>
    <text evidence="1">Reduced FMN (FMNH(2)).</text>
</comment>
<comment type="pathway">
    <text evidence="1">Metabolic intermediate biosynthesis; chorismate biosynthesis; chorismate from D-erythrose 4-phosphate and phosphoenolpyruvate: step 7/7.</text>
</comment>
<comment type="subunit">
    <text evidence="1">Homotetramer.</text>
</comment>
<comment type="similarity">
    <text evidence="1">Belongs to the chorismate synthase family.</text>
</comment>
<evidence type="ECO:0000255" key="1">
    <source>
        <dbReference type="HAMAP-Rule" id="MF_00300"/>
    </source>
</evidence>
<keyword id="KW-0028">Amino-acid biosynthesis</keyword>
<keyword id="KW-0057">Aromatic amino acid biosynthesis</keyword>
<keyword id="KW-0274">FAD</keyword>
<keyword id="KW-0285">Flavoprotein</keyword>
<keyword id="KW-0288">FMN</keyword>
<keyword id="KW-0456">Lyase</keyword>
<keyword id="KW-0521">NADP</keyword>
<keyword id="KW-1185">Reference proteome</keyword>
<accession>A1ADH8</accession>
<dbReference type="EC" id="4.2.3.5" evidence="1"/>
<dbReference type="EMBL" id="CP000468">
    <property type="protein sequence ID" value="ABJ01718.1"/>
    <property type="molecule type" value="Genomic_DNA"/>
</dbReference>
<dbReference type="RefSeq" id="WP_001331783.1">
    <property type="nucleotide sequence ID" value="NZ_CADILS010000025.1"/>
</dbReference>
<dbReference type="SMR" id="A1ADH8"/>
<dbReference type="KEGG" id="ecv:APECO1_4235"/>
<dbReference type="HOGENOM" id="CLU_034547_0_2_6"/>
<dbReference type="UniPathway" id="UPA00053">
    <property type="reaction ID" value="UER00090"/>
</dbReference>
<dbReference type="Proteomes" id="UP000008216">
    <property type="component" value="Chromosome"/>
</dbReference>
<dbReference type="GO" id="GO:0005829">
    <property type="term" value="C:cytosol"/>
    <property type="evidence" value="ECO:0007669"/>
    <property type="project" value="TreeGrafter"/>
</dbReference>
<dbReference type="GO" id="GO:0004107">
    <property type="term" value="F:chorismate synthase activity"/>
    <property type="evidence" value="ECO:0007669"/>
    <property type="project" value="UniProtKB-UniRule"/>
</dbReference>
<dbReference type="GO" id="GO:0010181">
    <property type="term" value="F:FMN binding"/>
    <property type="evidence" value="ECO:0007669"/>
    <property type="project" value="TreeGrafter"/>
</dbReference>
<dbReference type="GO" id="GO:0008652">
    <property type="term" value="P:amino acid biosynthetic process"/>
    <property type="evidence" value="ECO:0007669"/>
    <property type="project" value="UniProtKB-KW"/>
</dbReference>
<dbReference type="GO" id="GO:0009073">
    <property type="term" value="P:aromatic amino acid family biosynthetic process"/>
    <property type="evidence" value="ECO:0007669"/>
    <property type="project" value="UniProtKB-KW"/>
</dbReference>
<dbReference type="GO" id="GO:0009423">
    <property type="term" value="P:chorismate biosynthetic process"/>
    <property type="evidence" value="ECO:0007669"/>
    <property type="project" value="UniProtKB-UniRule"/>
</dbReference>
<dbReference type="CDD" id="cd07304">
    <property type="entry name" value="Chorismate_synthase"/>
    <property type="match status" value="1"/>
</dbReference>
<dbReference type="FunFam" id="3.60.150.10:FF:000001">
    <property type="entry name" value="Chorismate synthase"/>
    <property type="match status" value="1"/>
</dbReference>
<dbReference type="Gene3D" id="3.60.150.10">
    <property type="entry name" value="Chorismate synthase AroC"/>
    <property type="match status" value="1"/>
</dbReference>
<dbReference type="HAMAP" id="MF_00300">
    <property type="entry name" value="Chorismate_synth"/>
    <property type="match status" value="1"/>
</dbReference>
<dbReference type="InterPro" id="IPR000453">
    <property type="entry name" value="Chorismate_synth"/>
</dbReference>
<dbReference type="InterPro" id="IPR035904">
    <property type="entry name" value="Chorismate_synth_AroC_sf"/>
</dbReference>
<dbReference type="InterPro" id="IPR020541">
    <property type="entry name" value="Chorismate_synthase_CS"/>
</dbReference>
<dbReference type="NCBIfam" id="TIGR00033">
    <property type="entry name" value="aroC"/>
    <property type="match status" value="1"/>
</dbReference>
<dbReference type="NCBIfam" id="NF003793">
    <property type="entry name" value="PRK05382.1"/>
    <property type="match status" value="1"/>
</dbReference>
<dbReference type="PANTHER" id="PTHR21085">
    <property type="entry name" value="CHORISMATE SYNTHASE"/>
    <property type="match status" value="1"/>
</dbReference>
<dbReference type="PANTHER" id="PTHR21085:SF0">
    <property type="entry name" value="CHORISMATE SYNTHASE"/>
    <property type="match status" value="1"/>
</dbReference>
<dbReference type="Pfam" id="PF01264">
    <property type="entry name" value="Chorismate_synt"/>
    <property type="match status" value="1"/>
</dbReference>
<dbReference type="PIRSF" id="PIRSF001456">
    <property type="entry name" value="Chorismate_synth"/>
    <property type="match status" value="1"/>
</dbReference>
<dbReference type="SUPFAM" id="SSF103263">
    <property type="entry name" value="Chorismate synthase, AroC"/>
    <property type="match status" value="1"/>
</dbReference>
<dbReference type="PROSITE" id="PS00787">
    <property type="entry name" value="CHORISMATE_SYNTHASE_1"/>
    <property type="match status" value="1"/>
</dbReference>
<dbReference type="PROSITE" id="PS00788">
    <property type="entry name" value="CHORISMATE_SYNTHASE_2"/>
    <property type="match status" value="1"/>
</dbReference>
<dbReference type="PROSITE" id="PS00789">
    <property type="entry name" value="CHORISMATE_SYNTHASE_3"/>
    <property type="match status" value="1"/>
</dbReference>
<reference key="1">
    <citation type="journal article" date="2007" name="J. Bacteriol.">
        <title>The genome sequence of avian pathogenic Escherichia coli strain O1:K1:H7 shares strong similarities with human extraintestinal pathogenic E. coli genomes.</title>
        <authorList>
            <person name="Johnson T.J."/>
            <person name="Kariyawasam S."/>
            <person name="Wannemuehler Y."/>
            <person name="Mangiamele P."/>
            <person name="Johnson S.J."/>
            <person name="Doetkott C."/>
            <person name="Skyberg J.A."/>
            <person name="Lynne A.M."/>
            <person name="Johnson J.R."/>
            <person name="Nolan L.K."/>
        </authorList>
    </citation>
    <scope>NUCLEOTIDE SEQUENCE [LARGE SCALE GENOMIC DNA]</scope>
</reference>
<proteinExistence type="inferred from homology"/>
<feature type="chain" id="PRO_1000022484" description="Chorismate synthase">
    <location>
        <begin position="1"/>
        <end position="361"/>
    </location>
</feature>
<feature type="binding site" evidence="1">
    <location>
        <position position="48"/>
    </location>
    <ligand>
        <name>NADP(+)</name>
        <dbReference type="ChEBI" id="CHEBI:58349"/>
    </ligand>
</feature>
<feature type="binding site" evidence="1">
    <location>
        <position position="54"/>
    </location>
    <ligand>
        <name>NADP(+)</name>
        <dbReference type="ChEBI" id="CHEBI:58349"/>
    </ligand>
</feature>
<feature type="binding site" evidence="1">
    <location>
        <begin position="125"/>
        <end position="127"/>
    </location>
    <ligand>
        <name>FMN</name>
        <dbReference type="ChEBI" id="CHEBI:58210"/>
    </ligand>
</feature>
<feature type="binding site" evidence="1">
    <location>
        <begin position="238"/>
        <end position="239"/>
    </location>
    <ligand>
        <name>FMN</name>
        <dbReference type="ChEBI" id="CHEBI:58210"/>
    </ligand>
</feature>
<feature type="binding site" evidence="1">
    <location>
        <position position="278"/>
    </location>
    <ligand>
        <name>FMN</name>
        <dbReference type="ChEBI" id="CHEBI:58210"/>
    </ligand>
</feature>
<feature type="binding site" evidence="1">
    <location>
        <begin position="293"/>
        <end position="297"/>
    </location>
    <ligand>
        <name>FMN</name>
        <dbReference type="ChEBI" id="CHEBI:58210"/>
    </ligand>
</feature>
<feature type="binding site" evidence="1">
    <location>
        <position position="319"/>
    </location>
    <ligand>
        <name>FMN</name>
        <dbReference type="ChEBI" id="CHEBI:58210"/>
    </ligand>
</feature>
<organism>
    <name type="scientific">Escherichia coli O1:K1 / APEC</name>
    <dbReference type="NCBI Taxonomy" id="405955"/>
    <lineage>
        <taxon>Bacteria</taxon>
        <taxon>Pseudomonadati</taxon>
        <taxon>Pseudomonadota</taxon>
        <taxon>Gammaproteobacteria</taxon>
        <taxon>Enterobacterales</taxon>
        <taxon>Enterobacteriaceae</taxon>
        <taxon>Escherichia</taxon>
    </lineage>
</organism>
<gene>
    <name evidence="1" type="primary">aroC</name>
    <name type="ordered locus">Ecok1_22240</name>
    <name type="ORF">APECO1_4235</name>
</gene>